<keyword id="KW-0002">3D-structure</keyword>
<keyword id="KW-0966">Cell projection</keyword>
<keyword id="KW-0969">Cilium</keyword>
<keyword id="KW-0963">Cytoplasm</keyword>
<keyword id="KW-0206">Cytoskeleton</keyword>
<keyword id="KW-0217">Developmental protein</keyword>
<keyword id="KW-0221">Differentiation</keyword>
<keyword id="KW-0282">Flagellum</keyword>
<keyword id="KW-1185">Reference proteome</keyword>
<keyword id="KW-0677">Repeat</keyword>
<keyword id="KW-0744">Spermatogenesis</keyword>
<proteinExistence type="evidence at protein level"/>
<evidence type="ECO:0000256" key="1">
    <source>
        <dbReference type="SAM" id="MobiDB-lite"/>
    </source>
</evidence>
<evidence type="ECO:0000269" key="2">
    <source>
    </source>
</evidence>
<evidence type="ECO:0000269" key="3">
    <source>
    </source>
</evidence>
<evidence type="ECO:0000269" key="4">
    <source>
    </source>
</evidence>
<evidence type="ECO:0000303" key="5">
    <source>
    </source>
</evidence>
<evidence type="ECO:0000305" key="6"/>
<evidence type="ECO:0007744" key="7">
    <source>
        <dbReference type="PDB" id="8IYJ"/>
    </source>
</evidence>
<comment type="function">
    <text evidence="2 4">Outer dense fibers are filamentous structures located on the outside of the axoneme in the midpiece and principal piece of the mammalian sperm tail (PubMed:11870087, PubMed:37295417). May help to maintain the passive elastic structures and elastic recoil of the sperm tail (PubMed:11870087).</text>
</comment>
<comment type="subunit">
    <text evidence="4">Microtubule inner protein component of sperm flagellar doublet microtubules.</text>
</comment>
<comment type="subcellular location">
    <subcellularLocation>
        <location evidence="2">Cytoplasm</location>
    </subcellularLocation>
    <subcellularLocation>
        <location evidence="2 4">Cytoplasm</location>
        <location evidence="2 4">Cytoskeleton</location>
        <location evidence="2 4">Flagellum axoneme</location>
    </subcellularLocation>
    <text evidence="2">Expressed in the cytoplasmic lobe of spermatids.</text>
</comment>
<comment type="tissue specificity">
    <text evidence="2 3">Testis-specific (at protein level). Expression restricted to the germ cell fraction, absent in somatic cell fractions such as Sertoli and Leydig cells. Expression detected in the third week postpartum (23 days) after haploid germ cells developed, expression increased with age. Expressed in the tails of elongated spermatids sticking out toward the tubular lumen, and in cytoplasmic droplets still attached to the spermatid tail membrane. Expressed in the tails of mature sperm, from the connecting piece proximal to the head, along the middle and principal pieces, down to the distal end piece.</text>
</comment>
<comment type="miscellaneous">
    <text evidence="5">'Shippo' is a Japanese word for tail.</text>
</comment>
<comment type="similarity">
    <text evidence="6">Belongs to the CIMAP family.</text>
</comment>
<feature type="chain" id="PRO_0000299465" description="Ciliary microtubule associated protein 1A">
    <location>
        <begin position="1"/>
        <end position="254"/>
    </location>
</feature>
<feature type="repeat" description="STPGR 1">
    <location>
        <begin position="180"/>
        <end position="205"/>
    </location>
</feature>
<feature type="repeat" description="STPGR 2">
    <location>
        <begin position="216"/>
        <end position="241"/>
    </location>
</feature>
<feature type="region of interest" description="Disordered" evidence="1">
    <location>
        <begin position="207"/>
        <end position="228"/>
    </location>
</feature>
<feature type="sequence conflict" description="In Ref. 1; BAB70733." evidence="6" ref="1">
    <original>G</original>
    <variation>C</variation>
    <location>
        <position position="239"/>
    </location>
</feature>
<gene>
    <name type="primary">Cimap1a</name>
    <name type="synonym">Odf3</name>
    <name evidence="5" type="synonym">Shippo1</name>
    <name type="ORF">Beta390</name>
</gene>
<reference key="1">
    <citation type="journal article" date="2002" name="Biol. Reprod.">
        <title>Molecular cloning and characterization of a complementary DNA encoding sperm tail protein SHIPPO 1.</title>
        <authorList>
            <person name="Egydio de Carvalho C."/>
            <person name="Tanaka H."/>
            <person name="Iguchi N."/>
            <person name="Ventela S."/>
            <person name="Nojima H."/>
            <person name="Nishimune Y."/>
        </authorList>
    </citation>
    <scope>NUCLEOTIDE SEQUENCE [MRNA]</scope>
    <scope>SUBCELLULAR LOCATION</scope>
    <scope>TISSUE SPECIFICITY</scope>
    <source>
        <tissue>Testis</tissue>
    </source>
</reference>
<reference key="2">
    <citation type="journal article" date="2005" name="Science">
        <title>The transcriptional landscape of the mammalian genome.</title>
        <authorList>
            <person name="Carninci P."/>
            <person name="Kasukawa T."/>
            <person name="Katayama S."/>
            <person name="Gough J."/>
            <person name="Frith M.C."/>
            <person name="Maeda N."/>
            <person name="Oyama R."/>
            <person name="Ravasi T."/>
            <person name="Lenhard B."/>
            <person name="Wells C."/>
            <person name="Kodzius R."/>
            <person name="Shimokawa K."/>
            <person name="Bajic V.B."/>
            <person name="Brenner S.E."/>
            <person name="Batalov S."/>
            <person name="Forrest A.R."/>
            <person name="Zavolan M."/>
            <person name="Davis M.J."/>
            <person name="Wilming L.G."/>
            <person name="Aidinis V."/>
            <person name="Allen J.E."/>
            <person name="Ambesi-Impiombato A."/>
            <person name="Apweiler R."/>
            <person name="Aturaliya R.N."/>
            <person name="Bailey T.L."/>
            <person name="Bansal M."/>
            <person name="Baxter L."/>
            <person name="Beisel K.W."/>
            <person name="Bersano T."/>
            <person name="Bono H."/>
            <person name="Chalk A.M."/>
            <person name="Chiu K.P."/>
            <person name="Choudhary V."/>
            <person name="Christoffels A."/>
            <person name="Clutterbuck D.R."/>
            <person name="Crowe M.L."/>
            <person name="Dalla E."/>
            <person name="Dalrymple B.P."/>
            <person name="de Bono B."/>
            <person name="Della Gatta G."/>
            <person name="di Bernardo D."/>
            <person name="Down T."/>
            <person name="Engstrom P."/>
            <person name="Fagiolini M."/>
            <person name="Faulkner G."/>
            <person name="Fletcher C.F."/>
            <person name="Fukushima T."/>
            <person name="Furuno M."/>
            <person name="Futaki S."/>
            <person name="Gariboldi M."/>
            <person name="Georgii-Hemming P."/>
            <person name="Gingeras T.R."/>
            <person name="Gojobori T."/>
            <person name="Green R.E."/>
            <person name="Gustincich S."/>
            <person name="Harbers M."/>
            <person name="Hayashi Y."/>
            <person name="Hensch T.K."/>
            <person name="Hirokawa N."/>
            <person name="Hill D."/>
            <person name="Huminiecki L."/>
            <person name="Iacono M."/>
            <person name="Ikeo K."/>
            <person name="Iwama A."/>
            <person name="Ishikawa T."/>
            <person name="Jakt M."/>
            <person name="Kanapin A."/>
            <person name="Katoh M."/>
            <person name="Kawasawa Y."/>
            <person name="Kelso J."/>
            <person name="Kitamura H."/>
            <person name="Kitano H."/>
            <person name="Kollias G."/>
            <person name="Krishnan S.P."/>
            <person name="Kruger A."/>
            <person name="Kummerfeld S.K."/>
            <person name="Kurochkin I.V."/>
            <person name="Lareau L.F."/>
            <person name="Lazarevic D."/>
            <person name="Lipovich L."/>
            <person name="Liu J."/>
            <person name="Liuni S."/>
            <person name="McWilliam S."/>
            <person name="Madan Babu M."/>
            <person name="Madera M."/>
            <person name="Marchionni L."/>
            <person name="Matsuda H."/>
            <person name="Matsuzawa S."/>
            <person name="Miki H."/>
            <person name="Mignone F."/>
            <person name="Miyake S."/>
            <person name="Morris K."/>
            <person name="Mottagui-Tabar S."/>
            <person name="Mulder N."/>
            <person name="Nakano N."/>
            <person name="Nakauchi H."/>
            <person name="Ng P."/>
            <person name="Nilsson R."/>
            <person name="Nishiguchi S."/>
            <person name="Nishikawa S."/>
            <person name="Nori F."/>
            <person name="Ohara O."/>
            <person name="Okazaki Y."/>
            <person name="Orlando V."/>
            <person name="Pang K.C."/>
            <person name="Pavan W.J."/>
            <person name="Pavesi G."/>
            <person name="Pesole G."/>
            <person name="Petrovsky N."/>
            <person name="Piazza S."/>
            <person name="Reed J."/>
            <person name="Reid J.F."/>
            <person name="Ring B.Z."/>
            <person name="Ringwald M."/>
            <person name="Rost B."/>
            <person name="Ruan Y."/>
            <person name="Salzberg S.L."/>
            <person name="Sandelin A."/>
            <person name="Schneider C."/>
            <person name="Schoenbach C."/>
            <person name="Sekiguchi K."/>
            <person name="Semple C.A."/>
            <person name="Seno S."/>
            <person name="Sessa L."/>
            <person name="Sheng Y."/>
            <person name="Shibata Y."/>
            <person name="Shimada H."/>
            <person name="Shimada K."/>
            <person name="Silva D."/>
            <person name="Sinclair B."/>
            <person name="Sperling S."/>
            <person name="Stupka E."/>
            <person name="Sugiura K."/>
            <person name="Sultana R."/>
            <person name="Takenaka Y."/>
            <person name="Taki K."/>
            <person name="Tammoja K."/>
            <person name="Tan S.L."/>
            <person name="Tang S."/>
            <person name="Taylor M.S."/>
            <person name="Tegner J."/>
            <person name="Teichmann S.A."/>
            <person name="Ueda H.R."/>
            <person name="van Nimwegen E."/>
            <person name="Verardo R."/>
            <person name="Wei C.L."/>
            <person name="Yagi K."/>
            <person name="Yamanishi H."/>
            <person name="Zabarovsky E."/>
            <person name="Zhu S."/>
            <person name="Zimmer A."/>
            <person name="Hide W."/>
            <person name="Bult C."/>
            <person name="Grimmond S.M."/>
            <person name="Teasdale R.D."/>
            <person name="Liu E.T."/>
            <person name="Brusic V."/>
            <person name="Quackenbush J."/>
            <person name="Wahlestedt C."/>
            <person name="Mattick J.S."/>
            <person name="Hume D.A."/>
            <person name="Kai C."/>
            <person name="Sasaki D."/>
            <person name="Tomaru Y."/>
            <person name="Fukuda S."/>
            <person name="Kanamori-Katayama M."/>
            <person name="Suzuki M."/>
            <person name="Aoki J."/>
            <person name="Arakawa T."/>
            <person name="Iida J."/>
            <person name="Imamura K."/>
            <person name="Itoh M."/>
            <person name="Kato T."/>
            <person name="Kawaji H."/>
            <person name="Kawagashira N."/>
            <person name="Kawashima T."/>
            <person name="Kojima M."/>
            <person name="Kondo S."/>
            <person name="Konno H."/>
            <person name="Nakano K."/>
            <person name="Ninomiya N."/>
            <person name="Nishio T."/>
            <person name="Okada M."/>
            <person name="Plessy C."/>
            <person name="Shibata K."/>
            <person name="Shiraki T."/>
            <person name="Suzuki S."/>
            <person name="Tagami M."/>
            <person name="Waki K."/>
            <person name="Watahiki A."/>
            <person name="Okamura-Oho Y."/>
            <person name="Suzuki H."/>
            <person name="Kawai J."/>
            <person name="Hayashizaki Y."/>
        </authorList>
    </citation>
    <scope>NUCLEOTIDE SEQUENCE [LARGE SCALE MRNA]</scope>
    <scope>TISSUE SPECIFICITY</scope>
    <source>
        <strain>C57BL/6J</strain>
        <tissue>Testis</tissue>
    </source>
</reference>
<reference key="3">
    <citation type="journal article" date="2004" name="Genome Res.">
        <title>The status, quality, and expansion of the NIH full-length cDNA project: the Mammalian Gene Collection (MGC).</title>
        <authorList>
            <consortium name="The MGC Project Team"/>
        </authorList>
    </citation>
    <scope>NUCLEOTIDE SEQUENCE [LARGE SCALE MRNA]</scope>
</reference>
<reference evidence="7" key="4">
    <citation type="journal article" date="2023" name="Cell">
        <title>Structures of sperm flagellar doublet microtubules expand the genetic spectrum of male infertility.</title>
        <authorList>
            <person name="Zhou L."/>
            <person name="Liu H."/>
            <person name="Liu S."/>
            <person name="Yang X."/>
            <person name="Dong Y."/>
            <person name="Pan Y."/>
            <person name="Xiao Z."/>
            <person name="Zheng B."/>
            <person name="Sun Y."/>
            <person name="Huang P."/>
            <person name="Zhang X."/>
            <person name="Hu J."/>
            <person name="Sun R."/>
            <person name="Feng S."/>
            <person name="Zhu Y."/>
            <person name="Liu M."/>
            <person name="Gui M."/>
            <person name="Wu J."/>
        </authorList>
    </citation>
    <scope>STRUCTURE BY ELECTRON MICROSCOPY (3.50 ANGSTROMS) OF SPERM FLAGELLAR DOUBLET MICROTUBULES</scope>
    <scope>FUNCTION</scope>
    <scope>SUBCELLULAR LOCATION</scope>
    <scope>SUBUNIT</scope>
</reference>
<name>CMA1A_MOUSE</name>
<dbReference type="EMBL" id="AB067773">
    <property type="protein sequence ID" value="BAB70733.1"/>
    <property type="molecule type" value="mRNA"/>
</dbReference>
<dbReference type="EMBL" id="AK005883">
    <property type="protein sequence ID" value="BAB24298.1"/>
    <property type="molecule type" value="mRNA"/>
</dbReference>
<dbReference type="EMBL" id="BC104105">
    <property type="protein sequence ID" value="AAI04106.1"/>
    <property type="molecule type" value="mRNA"/>
</dbReference>
<dbReference type="EMBL" id="BC104106">
    <property type="protein sequence ID" value="AAI04107.1"/>
    <property type="molecule type" value="mRNA"/>
</dbReference>
<dbReference type="EMBL" id="BC106806">
    <property type="protein sequence ID" value="AAI06807.1"/>
    <property type="molecule type" value="mRNA"/>
</dbReference>
<dbReference type="CCDS" id="CCDS40177.1"/>
<dbReference type="RefSeq" id="NP_081295.2">
    <property type="nucleotide sequence ID" value="NM_027019.3"/>
</dbReference>
<dbReference type="PDB" id="8IYJ">
    <property type="method" value="EM"/>
    <property type="resolution" value="3.50 A"/>
    <property type="chains" value="Y0/Y1/Y2/Y3/Y4/Y5=1-254"/>
</dbReference>
<dbReference type="PDBsum" id="8IYJ"/>
<dbReference type="EMDB" id="EMD-35823"/>
<dbReference type="SMR" id="Q920N1"/>
<dbReference type="FunCoup" id="Q920N1">
    <property type="interactions" value="31"/>
</dbReference>
<dbReference type="STRING" id="10090.ENSMUSP00000026555"/>
<dbReference type="GlyGen" id="Q920N1">
    <property type="glycosylation" value="1 site"/>
</dbReference>
<dbReference type="iPTMnet" id="Q920N1"/>
<dbReference type="PhosphoSitePlus" id="Q920N1"/>
<dbReference type="PaxDb" id="10090-ENSMUSP00000026555"/>
<dbReference type="ProteomicsDB" id="293925"/>
<dbReference type="Antibodypedia" id="48707">
    <property type="antibodies" value="102 antibodies from 20 providers"/>
</dbReference>
<dbReference type="DNASU" id="69287"/>
<dbReference type="Ensembl" id="ENSMUST00000026555.12">
    <property type="protein sequence ID" value="ENSMUSP00000026555.6"/>
    <property type="gene ID" value="ENSMUSG00000025482.12"/>
</dbReference>
<dbReference type="GeneID" id="69287"/>
<dbReference type="KEGG" id="mmu:69287"/>
<dbReference type="UCSC" id="uc009kih.1">
    <property type="organism name" value="mouse"/>
</dbReference>
<dbReference type="AGR" id="MGI:1916537"/>
<dbReference type="CTD" id="113746"/>
<dbReference type="MGI" id="MGI:1916537">
    <property type="gene designation" value="Cimap1a"/>
</dbReference>
<dbReference type="VEuPathDB" id="HostDB:ENSMUSG00000025482"/>
<dbReference type="eggNOG" id="ENOG502QUIJ">
    <property type="taxonomic scope" value="Eukaryota"/>
</dbReference>
<dbReference type="GeneTree" id="ENSGT00940000156191"/>
<dbReference type="HOGENOM" id="CLU_088282_0_0_1"/>
<dbReference type="InParanoid" id="Q920N1"/>
<dbReference type="OMA" id="LMGRTQK"/>
<dbReference type="OrthoDB" id="7524at9989"/>
<dbReference type="PhylomeDB" id="Q920N1"/>
<dbReference type="TreeFam" id="TF325804"/>
<dbReference type="BioGRID-ORCS" id="69287">
    <property type="hits" value="1 hit in 76 CRISPR screens"/>
</dbReference>
<dbReference type="PRO" id="PR:Q920N1"/>
<dbReference type="Proteomes" id="UP000000589">
    <property type="component" value="Chromosome 7"/>
</dbReference>
<dbReference type="RNAct" id="Q920N1">
    <property type="molecule type" value="protein"/>
</dbReference>
<dbReference type="Bgee" id="ENSMUSG00000025482">
    <property type="expression patterns" value="Expressed in seminiferous tubule of testis and 8 other cell types or tissues"/>
</dbReference>
<dbReference type="ExpressionAtlas" id="Q920N1">
    <property type="expression patterns" value="baseline and differential"/>
</dbReference>
<dbReference type="GO" id="GO:0005737">
    <property type="term" value="C:cytoplasm"/>
    <property type="evidence" value="ECO:0007669"/>
    <property type="project" value="UniProtKB-SubCell"/>
</dbReference>
<dbReference type="GO" id="GO:0001520">
    <property type="term" value="C:outer dense fiber"/>
    <property type="evidence" value="ECO:0000314"/>
    <property type="project" value="MGI"/>
</dbReference>
<dbReference type="GO" id="GO:0036126">
    <property type="term" value="C:sperm flagellum"/>
    <property type="evidence" value="ECO:0000314"/>
    <property type="project" value="UniProtKB"/>
</dbReference>
<dbReference type="GO" id="GO:0030154">
    <property type="term" value="P:cell differentiation"/>
    <property type="evidence" value="ECO:0007669"/>
    <property type="project" value="UniProtKB-KW"/>
</dbReference>
<dbReference type="GO" id="GO:0030317">
    <property type="term" value="P:flagellated sperm motility"/>
    <property type="evidence" value="ECO:0000314"/>
    <property type="project" value="UniProtKB"/>
</dbReference>
<dbReference type="GO" id="GO:0007283">
    <property type="term" value="P:spermatogenesis"/>
    <property type="evidence" value="ECO:0007669"/>
    <property type="project" value="UniProtKB-KW"/>
</dbReference>
<dbReference type="InterPro" id="IPR051291">
    <property type="entry name" value="CIMAP"/>
</dbReference>
<dbReference type="InterPro" id="IPR010736">
    <property type="entry name" value="SHIPPO-rpt"/>
</dbReference>
<dbReference type="PANTHER" id="PTHR21580:SF23">
    <property type="entry name" value="OUTER DENSE FIBER PROTEIN 3"/>
    <property type="match status" value="1"/>
</dbReference>
<dbReference type="PANTHER" id="PTHR21580">
    <property type="entry name" value="SHIPPO-1-RELATED"/>
    <property type="match status" value="1"/>
</dbReference>
<dbReference type="Pfam" id="PF07004">
    <property type="entry name" value="SHIPPO-rpt"/>
    <property type="match status" value="4"/>
</dbReference>
<accession>Q920N1</accession>
<accession>Q9DAF2</accession>
<organism>
    <name type="scientific">Mus musculus</name>
    <name type="common">Mouse</name>
    <dbReference type="NCBI Taxonomy" id="10090"/>
    <lineage>
        <taxon>Eukaryota</taxon>
        <taxon>Metazoa</taxon>
        <taxon>Chordata</taxon>
        <taxon>Craniata</taxon>
        <taxon>Vertebrata</taxon>
        <taxon>Euteleostomi</taxon>
        <taxon>Mammalia</taxon>
        <taxon>Eutheria</taxon>
        <taxon>Euarchontoglires</taxon>
        <taxon>Glires</taxon>
        <taxon>Rodentia</taxon>
        <taxon>Myomorpha</taxon>
        <taxon>Muroidea</taxon>
        <taxon>Muridae</taxon>
        <taxon>Murinae</taxon>
        <taxon>Mus</taxon>
        <taxon>Mus</taxon>
    </lineage>
</organism>
<protein>
    <recommendedName>
        <fullName evidence="6">Ciliary microtubule associated protein 1A</fullName>
    </recommendedName>
    <alternativeName>
        <fullName>Outer dense fiber of sperm tails protein 3</fullName>
    </alternativeName>
    <alternativeName>
        <fullName>Outer dense fiber protein 3</fullName>
    </alternativeName>
    <alternativeName>
        <fullName evidence="5">Sperm tail protein SHIPPO 1</fullName>
    </alternativeName>
</protein>
<sequence length="254" mass="27650">MAEEVWMGTWRPHRPRGPIMALYSSPGPKYLIPPTTGFVKHTPTKLRAPAYSFRGAPMLLAENCSPGPRYSVNPKILKTGKDLGPAYSILGRYHTKTLLTPGPGDYFPEKSTKYVFDSAPSHSISARTKTFRVDSTPGPAAYMLPVVMGPHTVGKVSQPSFSIKGRSKLGSFSDDLHKTPGPAAYRQTEVQVTKFKAPQYTMAARVEPPGDKTLKPGPGAHSPEKVTLNKPCAPTVTFGIKHSDYMTPLVVDVE</sequence>